<organism>
    <name type="scientific">Danio rerio</name>
    <name type="common">Zebrafish</name>
    <name type="synonym">Brachydanio rerio</name>
    <dbReference type="NCBI Taxonomy" id="7955"/>
    <lineage>
        <taxon>Eukaryota</taxon>
        <taxon>Metazoa</taxon>
        <taxon>Chordata</taxon>
        <taxon>Craniata</taxon>
        <taxon>Vertebrata</taxon>
        <taxon>Euteleostomi</taxon>
        <taxon>Actinopterygii</taxon>
        <taxon>Neopterygii</taxon>
        <taxon>Teleostei</taxon>
        <taxon>Ostariophysi</taxon>
        <taxon>Cypriniformes</taxon>
        <taxon>Danionidae</taxon>
        <taxon>Danioninae</taxon>
        <taxon>Danio</taxon>
    </lineage>
</organism>
<gene>
    <name type="primary">sema3aa</name>
    <name type="synonym">semaz1a</name>
</gene>
<evidence type="ECO:0000250" key="1"/>
<evidence type="ECO:0000255" key="2"/>
<evidence type="ECO:0000255" key="3">
    <source>
        <dbReference type="PROSITE-ProRule" id="PRU00352"/>
    </source>
</evidence>
<evidence type="ECO:0000256" key="4">
    <source>
        <dbReference type="SAM" id="MobiDB-lite"/>
    </source>
</evidence>
<evidence type="ECO:0000305" key="5"/>
<keyword id="KW-0217">Developmental protein</keyword>
<keyword id="KW-0221">Differentiation</keyword>
<keyword id="KW-1015">Disulfide bond</keyword>
<keyword id="KW-0325">Glycoprotein</keyword>
<keyword id="KW-0393">Immunoglobulin domain</keyword>
<keyword id="KW-0524">Neurogenesis</keyword>
<keyword id="KW-1185">Reference proteome</keyword>
<keyword id="KW-0964">Secreted</keyword>
<keyword id="KW-0732">Signal</keyword>
<protein>
    <recommendedName>
        <fullName>Semaphorin-3aa</fullName>
    </recommendedName>
    <alternativeName>
        <fullName>Semaphorin-1A</fullName>
    </alternativeName>
    <alternativeName>
        <fullName>Semaphorin-Z1A</fullName>
        <shortName>Sema Z1A</shortName>
    </alternativeName>
</protein>
<proteinExistence type="evidence at transcript level"/>
<accession>Q9W7J1</accession>
<reference key="1">
    <citation type="journal article" date="1999" name="Brain Res. Bull.">
        <title>Molecular cloning, expression, and activity of zebrafish semaphorin Z1a.</title>
        <authorList>
            <person name="Yee C.S."/>
            <person name="Chandrasekhar A."/>
            <person name="Halloran M.C."/>
            <person name="Shoji W."/>
            <person name="Warren J.T."/>
            <person name="Kuwada J.Y."/>
        </authorList>
    </citation>
    <scope>NUCLEOTIDE SEQUENCE [MRNA]</scope>
    <source>
        <tissue>Embryo</tissue>
    </source>
</reference>
<comment type="function">
    <text>May influence outgrowth by a variety of growth cones including those of the posterior lateral line ganglion.</text>
</comment>
<comment type="subcellular location">
    <subcellularLocation>
        <location evidence="1">Secreted</location>
    </subcellularLocation>
</comment>
<comment type="developmental stage">
    <text>Expressed in highly specific patterns within the developing embryo.</text>
</comment>
<comment type="similarity">
    <text evidence="5">Belongs to the semaphorin family.</text>
</comment>
<feature type="signal peptide" evidence="2">
    <location>
        <begin position="1"/>
        <end position="17"/>
    </location>
</feature>
<feature type="chain" id="PRO_0000032307" description="Semaphorin-3aa">
    <location>
        <begin position="18"/>
        <end position="860"/>
    </location>
</feature>
<feature type="domain" description="Sema" evidence="3">
    <location>
        <begin position="31"/>
        <end position="515"/>
    </location>
</feature>
<feature type="domain" description="Ig-like C2-type">
    <location>
        <begin position="579"/>
        <end position="668"/>
    </location>
</feature>
<feature type="region of interest" description="Disordered" evidence="4">
    <location>
        <begin position="725"/>
        <end position="860"/>
    </location>
</feature>
<feature type="compositionally biased region" description="Polar residues" evidence="4">
    <location>
        <begin position="748"/>
        <end position="764"/>
    </location>
</feature>
<feature type="compositionally biased region" description="Polar residues" evidence="4">
    <location>
        <begin position="782"/>
        <end position="818"/>
    </location>
</feature>
<feature type="compositionally biased region" description="Basic and acidic residues" evidence="4">
    <location>
        <begin position="838"/>
        <end position="860"/>
    </location>
</feature>
<feature type="glycosylation site" description="N-linked (GlcNAc...) asparagine" evidence="2">
    <location>
        <position position="53"/>
    </location>
</feature>
<feature type="glycosylation site" description="N-linked (GlcNAc...) asparagine" evidence="2">
    <location>
        <position position="126"/>
    </location>
</feature>
<feature type="glycosylation site" description="N-linked (GlcNAc...) asparagine" evidence="2">
    <location>
        <position position="593"/>
    </location>
</feature>
<feature type="disulfide bond" evidence="1">
    <location>
        <begin position="104"/>
        <end position="115"/>
    </location>
</feature>
<feature type="disulfide bond" evidence="1">
    <location>
        <begin position="133"/>
        <end position="142"/>
    </location>
</feature>
<feature type="disulfide bond" evidence="1">
    <location>
        <begin position="270"/>
        <end position="382"/>
    </location>
</feature>
<feature type="disulfide bond" evidence="1">
    <location>
        <begin position="294"/>
        <end position="342"/>
    </location>
</feature>
<feature type="disulfide bond" evidence="1">
    <location>
        <begin position="518"/>
        <end position="536"/>
    </location>
</feature>
<feature type="disulfide bond" evidence="1">
    <location>
        <begin position="652"/>
        <end position="717"/>
    </location>
</feature>
<name>SE3AA_DANRE</name>
<sequence>MDYLVGIFLLLCGVALPGRVAPQHTKENVPRLKLSYNEMLESSNLVTFTGLANSSGYDTFLMDGERGRLLVGAEDHVFSFDLVNINRDVKQIAWPATPSKRDECKWAGKDLRKDCSNFVRVLQSYNQTHIYICGTGAFHPICSFLEMGKRAEDNIFRLDANYFENGRGKSPYDPKMQSSSLLLDGELYSGTSADFMGRDFAIFRTLGSHHPIRTEQHDSRWLNEPRFLGIHLIPESDNPEDDKIFLFFKENAMDGEHTGKATISRIGQLCKNDMGGHRSLVNKWTTFLKAKLTCSVPGLNGIDTHFDELQDVFLMSAKDPKNPVIYAVFTTSSNIFRGSAICMYSMADIRRVFLGPYAHRDGPNYQWVPFQGRVPYPRPGTCPSKTFGGFDSTKDLPDDVITFARLHPAMYNPVQPMGGKPIVVRTNVEYQFTQLVVDRVEAEDGQYDVMFIGTDLGTVLKVVTIPRESWHDLEEVVLEEMTVFREPTPITAMELSTKQQQLYLGSDLGISQMPLHRCEVYGKACAECCLARDPYCAWDGTECSRYFPTAKRRTRRQDIRNGDPLSQCSDLHHNDDLEGYSSVEERSVYGVENSSMFLECSPKSQRALIYWQLQKPNDERKHEIVIDERLSLTGQGLLIRSLTQADSGVFLCHAVEHGFIQPLRRINLQVIPSQRVGELLLRAGTNDKDPAPKHKLWYRDFMSLLEHPDLNSVDEFCERIWKREKKPKGKKAPKVNPGTGVSIKNEKTPQTTAQSLQNPTQRAQNAPKVPNNPSVQIFPKSTGLQRSQSPGGTVSTESQSTKPDTQKASESQRAQPNQAKKGPQTPQRGPPHTAKWKQLQENKRGRNRRTHEQQRPPRSV</sequence>
<dbReference type="EMBL" id="AF086761">
    <property type="protein sequence ID" value="AAD43964.1"/>
    <property type="molecule type" value="mRNA"/>
</dbReference>
<dbReference type="RefSeq" id="NP_571135.1">
    <property type="nucleotide sequence ID" value="NM_131060.1"/>
</dbReference>
<dbReference type="SMR" id="Q9W7J1"/>
<dbReference type="FunCoup" id="Q9W7J1">
    <property type="interactions" value="4"/>
</dbReference>
<dbReference type="STRING" id="7955.ENSDARP00000051791"/>
<dbReference type="GlyCosmos" id="Q9W7J1">
    <property type="glycosylation" value="3 sites, No reported glycans"/>
</dbReference>
<dbReference type="PaxDb" id="7955-ENSDARP00000051791"/>
<dbReference type="GeneID" id="30266"/>
<dbReference type="KEGG" id="dre:30266"/>
<dbReference type="AGR" id="ZFIN:ZDB-GENE-991209-3"/>
<dbReference type="CTD" id="30266"/>
<dbReference type="ZFIN" id="ZDB-GENE-991209-3">
    <property type="gene designation" value="sema3aa"/>
</dbReference>
<dbReference type="eggNOG" id="KOG3611">
    <property type="taxonomic scope" value="Eukaryota"/>
</dbReference>
<dbReference type="InParanoid" id="Q9W7J1"/>
<dbReference type="OrthoDB" id="9988752at2759"/>
<dbReference type="PhylomeDB" id="Q9W7J1"/>
<dbReference type="PRO" id="PR:Q9W7J1"/>
<dbReference type="Proteomes" id="UP000000437">
    <property type="component" value="Alternate scaffold 4"/>
</dbReference>
<dbReference type="Proteomes" id="UP000000437">
    <property type="component" value="Chromosome 4"/>
</dbReference>
<dbReference type="GO" id="GO:0030424">
    <property type="term" value="C:axon"/>
    <property type="evidence" value="ECO:0000318"/>
    <property type="project" value="GO_Central"/>
</dbReference>
<dbReference type="GO" id="GO:0005615">
    <property type="term" value="C:extracellular space"/>
    <property type="evidence" value="ECO:0000318"/>
    <property type="project" value="GO_Central"/>
</dbReference>
<dbReference type="GO" id="GO:0098978">
    <property type="term" value="C:glutamatergic synapse"/>
    <property type="evidence" value="ECO:0000318"/>
    <property type="project" value="GO_Central"/>
</dbReference>
<dbReference type="GO" id="GO:0005886">
    <property type="term" value="C:plasma membrane"/>
    <property type="evidence" value="ECO:0000318"/>
    <property type="project" value="GO_Central"/>
</dbReference>
<dbReference type="GO" id="GO:0045499">
    <property type="term" value="F:chemorepellent activity"/>
    <property type="evidence" value="ECO:0000318"/>
    <property type="project" value="GO_Central"/>
</dbReference>
<dbReference type="GO" id="GO:0038191">
    <property type="term" value="F:neuropilin binding"/>
    <property type="evidence" value="ECO:0000318"/>
    <property type="project" value="GO_Central"/>
</dbReference>
<dbReference type="GO" id="GO:0030215">
    <property type="term" value="F:semaphorin receptor binding"/>
    <property type="evidence" value="ECO:0000318"/>
    <property type="project" value="GO_Central"/>
</dbReference>
<dbReference type="GO" id="GO:0048844">
    <property type="term" value="P:artery morphogenesis"/>
    <property type="evidence" value="ECO:0000315"/>
    <property type="project" value="ZFIN"/>
</dbReference>
<dbReference type="GO" id="GO:0048755">
    <property type="term" value="P:branching morphogenesis of a nerve"/>
    <property type="evidence" value="ECO:0000316"/>
    <property type="project" value="ZFIN"/>
</dbReference>
<dbReference type="GO" id="GO:0016477">
    <property type="term" value="P:cell migration"/>
    <property type="evidence" value="ECO:0000315"/>
    <property type="project" value="ZFIN"/>
</dbReference>
<dbReference type="GO" id="GO:0035441">
    <property type="term" value="P:cell migration involved in vasculogenesis"/>
    <property type="evidence" value="ECO:0000315"/>
    <property type="project" value="ZFIN"/>
</dbReference>
<dbReference type="GO" id="GO:0008045">
    <property type="term" value="P:motor neuron axon guidance"/>
    <property type="evidence" value="ECO:0000315"/>
    <property type="project" value="ZFIN"/>
</dbReference>
<dbReference type="GO" id="GO:0050919">
    <property type="term" value="P:negative chemotaxis"/>
    <property type="evidence" value="ECO:0000318"/>
    <property type="project" value="GO_Central"/>
</dbReference>
<dbReference type="GO" id="GO:0001755">
    <property type="term" value="P:neural crest cell migration"/>
    <property type="evidence" value="ECO:0000318"/>
    <property type="project" value="GO_Central"/>
</dbReference>
<dbReference type="GO" id="GO:0030335">
    <property type="term" value="P:positive regulation of cell migration"/>
    <property type="evidence" value="ECO:0000318"/>
    <property type="project" value="GO_Central"/>
</dbReference>
<dbReference type="GO" id="GO:0071526">
    <property type="term" value="P:semaphorin-plexin signaling pathway"/>
    <property type="evidence" value="ECO:0000318"/>
    <property type="project" value="GO_Central"/>
</dbReference>
<dbReference type="GO" id="GO:0001570">
    <property type="term" value="P:vasculogenesis"/>
    <property type="evidence" value="ECO:0000315"/>
    <property type="project" value="ZFIN"/>
</dbReference>
<dbReference type="CDD" id="cd05871">
    <property type="entry name" value="Ig_Sema3"/>
    <property type="match status" value="1"/>
</dbReference>
<dbReference type="FunFam" id="2.130.10.10:FF:000015">
    <property type="entry name" value="Semaphorin 3B"/>
    <property type="match status" value="1"/>
</dbReference>
<dbReference type="FunFam" id="2.60.40.10:FF:000030">
    <property type="entry name" value="Semaphorin 3F like"/>
    <property type="match status" value="1"/>
</dbReference>
<dbReference type="FunFam" id="3.30.1680.10:FF:000001">
    <property type="entry name" value="Semaphorin 3F like"/>
    <property type="match status" value="1"/>
</dbReference>
<dbReference type="Gene3D" id="2.60.40.10">
    <property type="entry name" value="Immunoglobulins"/>
    <property type="match status" value="1"/>
</dbReference>
<dbReference type="Gene3D" id="3.30.1680.10">
    <property type="entry name" value="ligand-binding face of the semaphorins, domain 2"/>
    <property type="match status" value="1"/>
</dbReference>
<dbReference type="Gene3D" id="2.130.10.10">
    <property type="entry name" value="YVTN repeat-like/Quinoprotein amine dehydrogenase"/>
    <property type="match status" value="1"/>
</dbReference>
<dbReference type="InterPro" id="IPR007110">
    <property type="entry name" value="Ig-like_dom"/>
</dbReference>
<dbReference type="InterPro" id="IPR036179">
    <property type="entry name" value="Ig-like_dom_sf"/>
</dbReference>
<dbReference type="InterPro" id="IPR013783">
    <property type="entry name" value="Ig-like_fold"/>
</dbReference>
<dbReference type="InterPro" id="IPR003599">
    <property type="entry name" value="Ig_sub"/>
</dbReference>
<dbReference type="InterPro" id="IPR016201">
    <property type="entry name" value="PSI"/>
</dbReference>
<dbReference type="InterPro" id="IPR001627">
    <property type="entry name" value="Semap_dom"/>
</dbReference>
<dbReference type="InterPro" id="IPR036352">
    <property type="entry name" value="Semap_dom_sf"/>
</dbReference>
<dbReference type="InterPro" id="IPR027231">
    <property type="entry name" value="Semaphorin"/>
</dbReference>
<dbReference type="InterPro" id="IPR015943">
    <property type="entry name" value="WD40/YVTN_repeat-like_dom_sf"/>
</dbReference>
<dbReference type="PANTHER" id="PTHR11036">
    <property type="entry name" value="SEMAPHORIN"/>
    <property type="match status" value="1"/>
</dbReference>
<dbReference type="PANTHER" id="PTHR11036:SF71">
    <property type="entry name" value="SEMAPHORIN-3AA"/>
    <property type="match status" value="1"/>
</dbReference>
<dbReference type="Pfam" id="PF01403">
    <property type="entry name" value="Sema"/>
    <property type="match status" value="1"/>
</dbReference>
<dbReference type="SMART" id="SM00409">
    <property type="entry name" value="IG"/>
    <property type="match status" value="1"/>
</dbReference>
<dbReference type="SMART" id="SM00423">
    <property type="entry name" value="PSI"/>
    <property type="match status" value="1"/>
</dbReference>
<dbReference type="SMART" id="SM00630">
    <property type="entry name" value="Sema"/>
    <property type="match status" value="1"/>
</dbReference>
<dbReference type="SUPFAM" id="SSF48726">
    <property type="entry name" value="Immunoglobulin"/>
    <property type="match status" value="1"/>
</dbReference>
<dbReference type="SUPFAM" id="SSF103575">
    <property type="entry name" value="Plexin repeat"/>
    <property type="match status" value="1"/>
</dbReference>
<dbReference type="SUPFAM" id="SSF101912">
    <property type="entry name" value="Sema domain"/>
    <property type="match status" value="1"/>
</dbReference>
<dbReference type="PROSITE" id="PS50835">
    <property type="entry name" value="IG_LIKE"/>
    <property type="match status" value="1"/>
</dbReference>
<dbReference type="PROSITE" id="PS51004">
    <property type="entry name" value="SEMA"/>
    <property type="match status" value="1"/>
</dbReference>